<proteinExistence type="inferred from homology"/>
<sequence>MTILVVTGTGTGVGKTVVCAALASAARQAGIDVAVCKPVQTGTARGDDDLAEVGRLAGVTQLAGLARYPQPMAPAAAAEHAGMALPARDQIVRLIADLDRPGRLTLVEGAGGLLVELAEPGVTLRDVAVDVAAVALVVVTADLGTLNHTKLTLEALAAQQVSCAGLVIGSWPDPPGLVAASNRSALARIATVRAALPAGAASLDAGDFAAMSAAAFDRNWVAGLVG</sequence>
<dbReference type="EC" id="6.3.3.3" evidence="1"/>
<dbReference type="EMBL" id="AM408590">
    <property type="protein sequence ID" value="CAL71610.1"/>
    <property type="molecule type" value="Genomic_DNA"/>
</dbReference>
<dbReference type="RefSeq" id="WP_011799198.1">
    <property type="nucleotide sequence ID" value="NC_008769.1"/>
</dbReference>
<dbReference type="SMR" id="A1KJ01"/>
<dbReference type="KEGG" id="mbb:BCG_1623"/>
<dbReference type="HOGENOM" id="CLU_072551_1_0_11"/>
<dbReference type="UniPathway" id="UPA00078">
    <property type="reaction ID" value="UER00161"/>
</dbReference>
<dbReference type="Proteomes" id="UP000001472">
    <property type="component" value="Chromosome"/>
</dbReference>
<dbReference type="GO" id="GO:0005829">
    <property type="term" value="C:cytosol"/>
    <property type="evidence" value="ECO:0007669"/>
    <property type="project" value="TreeGrafter"/>
</dbReference>
<dbReference type="GO" id="GO:0005524">
    <property type="term" value="F:ATP binding"/>
    <property type="evidence" value="ECO:0007669"/>
    <property type="project" value="UniProtKB-UniRule"/>
</dbReference>
<dbReference type="GO" id="GO:0004141">
    <property type="term" value="F:dethiobiotin synthase activity"/>
    <property type="evidence" value="ECO:0007669"/>
    <property type="project" value="UniProtKB-UniRule"/>
</dbReference>
<dbReference type="GO" id="GO:0000287">
    <property type="term" value="F:magnesium ion binding"/>
    <property type="evidence" value="ECO:0007669"/>
    <property type="project" value="UniProtKB-UniRule"/>
</dbReference>
<dbReference type="GO" id="GO:0009102">
    <property type="term" value="P:biotin biosynthetic process"/>
    <property type="evidence" value="ECO:0007669"/>
    <property type="project" value="UniProtKB-UniRule"/>
</dbReference>
<dbReference type="FunFam" id="3.40.50.300:FF:002079">
    <property type="entry name" value="ATP-dependent dethiobiotin synthetase BioD"/>
    <property type="match status" value="1"/>
</dbReference>
<dbReference type="Gene3D" id="3.40.50.300">
    <property type="entry name" value="P-loop containing nucleotide triphosphate hydrolases"/>
    <property type="match status" value="1"/>
</dbReference>
<dbReference type="HAMAP" id="MF_00336">
    <property type="entry name" value="BioD"/>
    <property type="match status" value="1"/>
</dbReference>
<dbReference type="InterPro" id="IPR004472">
    <property type="entry name" value="DTB_synth_BioD"/>
</dbReference>
<dbReference type="InterPro" id="IPR027417">
    <property type="entry name" value="P-loop_NTPase"/>
</dbReference>
<dbReference type="NCBIfam" id="TIGR00347">
    <property type="entry name" value="bioD"/>
    <property type="match status" value="1"/>
</dbReference>
<dbReference type="PANTHER" id="PTHR43210">
    <property type="entry name" value="DETHIOBIOTIN SYNTHETASE"/>
    <property type="match status" value="1"/>
</dbReference>
<dbReference type="PANTHER" id="PTHR43210:SF5">
    <property type="entry name" value="DETHIOBIOTIN SYNTHETASE"/>
    <property type="match status" value="1"/>
</dbReference>
<dbReference type="Pfam" id="PF13500">
    <property type="entry name" value="AAA_26"/>
    <property type="match status" value="1"/>
</dbReference>
<dbReference type="SUPFAM" id="SSF52540">
    <property type="entry name" value="P-loop containing nucleoside triphosphate hydrolases"/>
    <property type="match status" value="1"/>
</dbReference>
<gene>
    <name evidence="1" type="primary">bioD</name>
    <name type="ordered locus">BCG_1623</name>
</gene>
<comment type="function">
    <text evidence="1">Catalyzes a mechanistically unusual reaction, the ATP-dependent insertion of CO2 between the N7 and N8 nitrogen atoms of 7,8-diaminopelargonic acid (DAPA, also called 7,8-diammoniononanoate) to form a ureido ring.</text>
</comment>
<comment type="catalytic activity">
    <reaction evidence="1">
        <text>(7R,8S)-7,8-diammoniononanoate + CO2 + ATP = (4R,5S)-dethiobiotin + ADP + phosphate + 3 H(+)</text>
        <dbReference type="Rhea" id="RHEA:15805"/>
        <dbReference type="ChEBI" id="CHEBI:15378"/>
        <dbReference type="ChEBI" id="CHEBI:16526"/>
        <dbReference type="ChEBI" id="CHEBI:30616"/>
        <dbReference type="ChEBI" id="CHEBI:43474"/>
        <dbReference type="ChEBI" id="CHEBI:149469"/>
        <dbReference type="ChEBI" id="CHEBI:149473"/>
        <dbReference type="ChEBI" id="CHEBI:456216"/>
        <dbReference type="EC" id="6.3.3.3"/>
    </reaction>
</comment>
<comment type="cofactor">
    <cofactor evidence="1">
        <name>Mg(2+)</name>
        <dbReference type="ChEBI" id="CHEBI:18420"/>
    </cofactor>
</comment>
<comment type="pathway">
    <text evidence="1">Cofactor biosynthesis; biotin biosynthesis; biotin from 7,8-diaminononanoate: step 1/2.</text>
</comment>
<comment type="subunit">
    <text evidence="1">Homodimer.</text>
</comment>
<comment type="subcellular location">
    <subcellularLocation>
        <location evidence="1">Cytoplasm</location>
    </subcellularLocation>
</comment>
<comment type="similarity">
    <text evidence="1">Belongs to the dethiobiotin synthetase family.</text>
</comment>
<evidence type="ECO:0000255" key="1">
    <source>
        <dbReference type="HAMAP-Rule" id="MF_00336"/>
    </source>
</evidence>
<keyword id="KW-0067">ATP-binding</keyword>
<keyword id="KW-0093">Biotin biosynthesis</keyword>
<keyword id="KW-0963">Cytoplasm</keyword>
<keyword id="KW-0436">Ligase</keyword>
<keyword id="KW-0460">Magnesium</keyword>
<keyword id="KW-0479">Metal-binding</keyword>
<keyword id="KW-0547">Nucleotide-binding</keyword>
<accession>A1KJ01</accession>
<protein>
    <recommendedName>
        <fullName evidence="1">ATP-dependent dethiobiotin synthetase BioD</fullName>
        <ecNumber evidence="1">6.3.3.3</ecNumber>
    </recommendedName>
    <alternativeName>
        <fullName evidence="1">DTB synthetase</fullName>
        <shortName evidence="1">DTBS</shortName>
    </alternativeName>
    <alternativeName>
        <fullName evidence="1">Dethiobiotin synthase</fullName>
    </alternativeName>
</protein>
<reference key="1">
    <citation type="journal article" date="2007" name="Proc. Natl. Acad. Sci. U.S.A.">
        <title>Genome plasticity of BCG and impact on vaccine efficacy.</title>
        <authorList>
            <person name="Brosch R."/>
            <person name="Gordon S.V."/>
            <person name="Garnier T."/>
            <person name="Eiglmeier K."/>
            <person name="Frigui W."/>
            <person name="Valenti P."/>
            <person name="Dos Santos S."/>
            <person name="Duthoy S."/>
            <person name="Lacroix C."/>
            <person name="Garcia-Pelayo C."/>
            <person name="Inwald J.K."/>
            <person name="Golby P."/>
            <person name="Garcia J.N."/>
            <person name="Hewinson R.G."/>
            <person name="Behr M.A."/>
            <person name="Quail M.A."/>
            <person name="Churcher C."/>
            <person name="Barrell B.G."/>
            <person name="Parkhill J."/>
            <person name="Cole S.T."/>
        </authorList>
    </citation>
    <scope>NUCLEOTIDE SEQUENCE [LARGE SCALE GENOMIC DNA]</scope>
    <source>
        <strain>BCG / Pasteur 1173P2</strain>
    </source>
</reference>
<feature type="chain" id="PRO_0000302524" description="ATP-dependent dethiobiotin synthetase BioD">
    <location>
        <begin position="1"/>
        <end position="226"/>
    </location>
</feature>
<feature type="active site" evidence="1">
    <location>
        <position position="37"/>
    </location>
</feature>
<feature type="binding site" evidence="1">
    <location>
        <begin position="12"/>
        <end position="17"/>
    </location>
    <ligand>
        <name>ATP</name>
        <dbReference type="ChEBI" id="CHEBI:30616"/>
    </ligand>
</feature>
<feature type="binding site" evidence="1">
    <location>
        <position position="16"/>
    </location>
    <ligand>
        <name>Mg(2+)</name>
        <dbReference type="ChEBI" id="CHEBI:18420"/>
    </ligand>
</feature>
<feature type="binding site" evidence="1">
    <location>
        <position position="41"/>
    </location>
    <ligand>
        <name>substrate</name>
    </ligand>
</feature>
<feature type="binding site" evidence="1">
    <location>
        <position position="49"/>
    </location>
    <ligand>
        <name>ATP</name>
        <dbReference type="ChEBI" id="CHEBI:30616"/>
    </ligand>
</feature>
<feature type="binding site" evidence="1">
    <location>
        <position position="49"/>
    </location>
    <ligand>
        <name>Mg(2+)</name>
        <dbReference type="ChEBI" id="CHEBI:18420"/>
    </ligand>
</feature>
<feature type="binding site" evidence="1">
    <location>
        <begin position="108"/>
        <end position="111"/>
    </location>
    <ligand>
        <name>ATP</name>
        <dbReference type="ChEBI" id="CHEBI:30616"/>
    </ligand>
</feature>
<feature type="binding site" evidence="1">
    <location>
        <position position="108"/>
    </location>
    <ligand>
        <name>Mg(2+)</name>
        <dbReference type="ChEBI" id="CHEBI:18420"/>
    </ligand>
</feature>
<feature type="binding site" evidence="1">
    <location>
        <begin position="169"/>
        <end position="170"/>
    </location>
    <ligand>
        <name>ATP</name>
        <dbReference type="ChEBI" id="CHEBI:30616"/>
    </ligand>
</feature>
<feature type="binding site" evidence="1">
    <location>
        <begin position="197"/>
        <end position="199"/>
    </location>
    <ligand>
        <name>ATP</name>
        <dbReference type="ChEBI" id="CHEBI:30616"/>
    </ligand>
</feature>
<name>BIOD_MYCBP</name>
<organism>
    <name type="scientific">Mycobacterium bovis (strain BCG / Pasteur 1173P2)</name>
    <dbReference type="NCBI Taxonomy" id="410289"/>
    <lineage>
        <taxon>Bacteria</taxon>
        <taxon>Bacillati</taxon>
        <taxon>Actinomycetota</taxon>
        <taxon>Actinomycetes</taxon>
        <taxon>Mycobacteriales</taxon>
        <taxon>Mycobacteriaceae</taxon>
        <taxon>Mycobacterium</taxon>
        <taxon>Mycobacterium tuberculosis complex</taxon>
    </lineage>
</organism>